<name>NEP_I83A1</name>
<proteinExistence type="inferred from homology"/>
<evidence type="ECO:0000255" key="1">
    <source>
        <dbReference type="HAMAP-Rule" id="MF_04067"/>
    </source>
</evidence>
<comment type="function">
    <text evidence="1">Mediates the nuclear export of encapsidated genomic RNAs (ribonucleoproteins, RNPs). Acts as an adapter between viral RNPs complexes and the nuclear export machinery of the cell. Possesses no intrinsic RNA-binding activity, but includes a C-terminal M1-binding domain. This domain is believed to allow recognition of RNPs bound to the protein M1. Since protein M1 is not available in large quantities before late stages of infection, such an indirect recognition mechanism probably ensures that genomic RNPs are not exported from the host nucleus until sufficient quantities of viral mRNA and progeny genomic RNA have been synthesized. Furthermore, the RNPs enter the host cytoplasm only when associated with the M1 protein that is necessary to guide them to the plasma membrane. May down-regulate viral RNA synthesis when overproduced.</text>
</comment>
<comment type="subunit">
    <text evidence="1">Interacts with protein M1. May interact with host nucleoporin RAB/HRB and exportin XPO1/CRM1.</text>
</comment>
<comment type="subcellular location">
    <subcellularLocation>
        <location evidence="1">Virion</location>
    </subcellularLocation>
    <subcellularLocation>
        <location evidence="1">Host nucleus</location>
    </subcellularLocation>
</comment>
<comment type="alternative products">
    <event type="alternative splicing"/>
    <isoform>
        <id>P11619-1</id>
        <name>NEP</name>
        <name>NS2</name>
        <sequence type="displayed"/>
    </isoform>
    <isoform>
        <id>P11618-1</id>
        <name>NS1</name>
        <sequence type="external"/>
    </isoform>
</comment>
<comment type="miscellaneous">
    <text>Average number present in a viral particle is estimated to be 130-200 molecules.</text>
</comment>
<comment type="similarity">
    <text evidence="1">Belongs to the influenza viruses NEP family.</text>
</comment>
<sequence length="121" mass="14279">MDPNTVSSFQDILMRMSKMQLGSSSGDLNGMITQFESLKLYRDSLGEAVMRMGDLHSLQNRNGKWREQLGQKFEEIRWLIEEVRHKLKITENSFEQITFMQALQLLFEVEQEIRTFSFQLI</sequence>
<accession>P11619</accession>
<accession>A4GCI0</accession>
<protein>
    <recommendedName>
        <fullName evidence="1">Nuclear export protein</fullName>
        <shortName evidence="1">NEP</shortName>
    </recommendedName>
    <alternativeName>
        <fullName evidence="1">Non-structural protein 2</fullName>
        <shortName evidence="1">NS2</shortName>
    </alternativeName>
</protein>
<feature type="chain" id="PRO_0000078977" description="Nuclear export protein">
    <location>
        <begin position="1"/>
        <end position="121"/>
    </location>
</feature>
<feature type="short sequence motif" description="Nuclear export signal" evidence="1">
    <location>
        <begin position="12"/>
        <end position="21"/>
    </location>
</feature>
<feature type="short sequence motif" description="Nuclear export signal" evidence="1">
    <location>
        <begin position="85"/>
        <end position="94"/>
    </location>
</feature>
<organism>
    <name type="scientific">Influenza A virus (strain A/Chile/1/1983 H1N1)</name>
    <dbReference type="NCBI Taxonomy" id="380985"/>
    <lineage>
        <taxon>Viruses</taxon>
        <taxon>Riboviria</taxon>
        <taxon>Orthornavirae</taxon>
        <taxon>Negarnaviricota</taxon>
        <taxon>Polyploviricotina</taxon>
        <taxon>Insthoviricetes</taxon>
        <taxon>Articulavirales</taxon>
        <taxon>Orthomyxoviridae</taxon>
        <taxon>Alphainfluenzavirus</taxon>
        <taxon>Alphainfluenzavirus influenzae</taxon>
        <taxon>Influenza A virus</taxon>
    </lineage>
</organism>
<organismHost>
    <name type="scientific">Aves</name>
    <dbReference type="NCBI Taxonomy" id="8782"/>
</organismHost>
<organismHost>
    <name type="scientific">Homo sapiens</name>
    <name type="common">Human</name>
    <dbReference type="NCBI Taxonomy" id="9606"/>
</organismHost>
<organismHost>
    <name type="scientific">Sus scrofa</name>
    <name type="common">Pig</name>
    <dbReference type="NCBI Taxonomy" id="9823"/>
</organismHost>
<gene>
    <name evidence="1" type="primary">NS</name>
</gene>
<dbReference type="EMBL" id="X15282">
    <property type="protein sequence ID" value="CAA33356.1"/>
    <property type="molecule type" value="Genomic_RNA"/>
</dbReference>
<dbReference type="EMBL" id="CY020441">
    <property type="protein sequence ID" value="ABO38346.1"/>
    <property type="molecule type" value="Viral_cRNA"/>
</dbReference>
<dbReference type="SMR" id="P11619"/>
<dbReference type="Proteomes" id="UP000008582">
    <property type="component" value="Genome"/>
</dbReference>
<dbReference type="GO" id="GO:0042025">
    <property type="term" value="C:host cell nucleus"/>
    <property type="evidence" value="ECO:0007669"/>
    <property type="project" value="UniProtKB-SubCell"/>
</dbReference>
<dbReference type="GO" id="GO:0044423">
    <property type="term" value="C:virion component"/>
    <property type="evidence" value="ECO:0007669"/>
    <property type="project" value="UniProtKB-UniRule"/>
</dbReference>
<dbReference type="GO" id="GO:0039675">
    <property type="term" value="P:exit of virus from host cell nucleus through nuclear pore"/>
    <property type="evidence" value="ECO:0007669"/>
    <property type="project" value="UniProtKB-UniRule"/>
</dbReference>
<dbReference type="Gene3D" id="1.10.287.230">
    <property type="match status" value="1"/>
</dbReference>
<dbReference type="Gene3D" id="1.10.287.10">
    <property type="entry name" value="S15/NS1, RNA-binding"/>
    <property type="match status" value="1"/>
</dbReference>
<dbReference type="HAMAP" id="MF_04067">
    <property type="entry name" value="INFV_NEP"/>
    <property type="match status" value="1"/>
</dbReference>
<dbReference type="InterPro" id="IPR000968">
    <property type="entry name" value="Flu_NS2"/>
</dbReference>
<dbReference type="Pfam" id="PF00601">
    <property type="entry name" value="Flu_NS2"/>
    <property type="match status" value="1"/>
</dbReference>
<dbReference type="SUPFAM" id="SSF101156">
    <property type="entry name" value="Nonstructural protein ns2, Nep, M1-binding domain"/>
    <property type="match status" value="1"/>
</dbReference>
<reference key="1">
    <citation type="journal article" date="1989" name="Nucleic Acids Res.">
        <title>Nucleotide sequence of the NS gene of influenza virus A/Chile/1/83 (H1N1).</title>
        <authorList>
            <person name="Schreier E."/>
            <person name="Roeske H."/>
            <person name="Michel S."/>
        </authorList>
    </citation>
    <scope>NUCLEOTIDE SEQUENCE [GENOMIC RNA]</scope>
</reference>
<reference key="2">
    <citation type="submission" date="2007-03" db="EMBL/GenBank/DDBJ databases">
        <title>The NIAID influenza genome sequencing project.</title>
        <authorList>
            <person name="Ghedin E."/>
            <person name="Spiro D."/>
            <person name="Miller N."/>
            <person name="Zaborsky J."/>
            <person name="Feldblyum T."/>
            <person name="Subbu V."/>
            <person name="Shumway M."/>
            <person name="Sparenborg J."/>
            <person name="Groveman L."/>
            <person name="Halpin R."/>
            <person name="Sitz J."/>
            <person name="Koo H."/>
            <person name="Salzberg S.L."/>
            <person name="Webster R.G."/>
            <person name="Hoffmann E."/>
            <person name="Krauss S."/>
            <person name="Naeve C."/>
            <person name="Bao Y."/>
            <person name="Bolotov P."/>
            <person name="Dernovoy D."/>
            <person name="Kiryutin B."/>
            <person name="Lipman D.J."/>
            <person name="Tatusova T."/>
        </authorList>
    </citation>
    <scope>NUCLEOTIDE SEQUENCE [GENOMIC RNA]</scope>
</reference>
<reference key="3">
    <citation type="submission" date="2007-03" db="EMBL/GenBank/DDBJ databases">
        <authorList>
            <consortium name="The NIAID Influenza Genome Sequencing Consortium"/>
        </authorList>
    </citation>
    <scope>NUCLEOTIDE SEQUENCE [GENOMIC RNA]</scope>
</reference>
<keyword id="KW-0025">Alternative splicing</keyword>
<keyword id="KW-1048">Host nucleus</keyword>
<keyword id="KW-0945">Host-virus interaction</keyword>
<keyword id="KW-0813">Transport</keyword>
<keyword id="KW-0946">Virion</keyword>